<gene>
    <name evidence="1" type="primary">uppP</name>
    <name type="synonym">bacA</name>
    <name type="synonym">upk</name>
    <name type="ordered locus">FN1702</name>
</gene>
<evidence type="ECO:0000255" key="1">
    <source>
        <dbReference type="HAMAP-Rule" id="MF_01006"/>
    </source>
</evidence>
<organism>
    <name type="scientific">Fusobacterium nucleatum subsp. nucleatum (strain ATCC 25586 / DSM 15643 / BCRC 10681 / CIP 101130 / JCM 8532 / KCTC 2640 / LMG 13131 / VPI 4355)</name>
    <dbReference type="NCBI Taxonomy" id="190304"/>
    <lineage>
        <taxon>Bacteria</taxon>
        <taxon>Fusobacteriati</taxon>
        <taxon>Fusobacteriota</taxon>
        <taxon>Fusobacteriia</taxon>
        <taxon>Fusobacteriales</taxon>
        <taxon>Fusobacteriaceae</taxon>
        <taxon>Fusobacterium</taxon>
    </lineage>
</organism>
<sequence length="266" mass="29766">MVVILAIVEGITEFLPISSTGHMILVNKLIGGEYLSPTFRNSFLIIIQLGAIFSVVVYFWKDISPFVKTKKEFVLKFRLWLKIIVGVLPAMVIGLLLDDIIDKYFLDNVLIVAITLIAYGVIFIGIEVVYKLKNIKPKVKRFAGLKYRTAFLIGFFQCLAMIPGTSRSGATIIGALLLGLSRPLAAEFSFYLAIPTMFGATALKLFKNGLAFTEMEWSYLALGSAIAFVVAYIVIKWFMDFIKKRSFASFGLYRIILGIIVIVLLY</sequence>
<reference key="1">
    <citation type="journal article" date="2002" name="J. Bacteriol.">
        <title>Genome sequence and analysis of the oral bacterium Fusobacterium nucleatum strain ATCC 25586.</title>
        <authorList>
            <person name="Kapatral V."/>
            <person name="Anderson I."/>
            <person name="Ivanova N."/>
            <person name="Reznik G."/>
            <person name="Los T."/>
            <person name="Lykidis A."/>
            <person name="Bhattacharyya A."/>
            <person name="Bartman A."/>
            <person name="Gardner W."/>
            <person name="Grechkin G."/>
            <person name="Zhu L."/>
            <person name="Vasieva O."/>
            <person name="Chu L."/>
            <person name="Kogan Y."/>
            <person name="Chaga O."/>
            <person name="Goltsman E."/>
            <person name="Bernal A."/>
            <person name="Larsen N."/>
            <person name="D'Souza M."/>
            <person name="Walunas T."/>
            <person name="Pusch G."/>
            <person name="Haselkorn R."/>
            <person name="Fonstein M."/>
            <person name="Kyrpides N.C."/>
            <person name="Overbeek R."/>
        </authorList>
    </citation>
    <scope>NUCLEOTIDE SEQUENCE [LARGE SCALE GENOMIC DNA]</scope>
    <source>
        <strain>ATCC 25586 / DSM 15643 / BCRC 10681 / CIP 101130 / JCM 8532 / KCTC 2640 / LMG 13131 / VPI 4355</strain>
    </source>
</reference>
<protein>
    <recommendedName>
        <fullName evidence="1">Undecaprenyl-diphosphatase</fullName>
        <ecNumber evidence="1">3.6.1.27</ecNumber>
    </recommendedName>
    <alternativeName>
        <fullName evidence="1">Bacitracin resistance protein</fullName>
    </alternativeName>
    <alternativeName>
        <fullName evidence="1">Undecaprenyl pyrophosphate phosphatase</fullName>
    </alternativeName>
</protein>
<comment type="function">
    <text evidence="1">Catalyzes the dephosphorylation of undecaprenyl diphosphate (UPP). Confers resistance to bacitracin.</text>
</comment>
<comment type="catalytic activity">
    <reaction evidence="1">
        <text>di-trans,octa-cis-undecaprenyl diphosphate + H2O = di-trans,octa-cis-undecaprenyl phosphate + phosphate + H(+)</text>
        <dbReference type="Rhea" id="RHEA:28094"/>
        <dbReference type="ChEBI" id="CHEBI:15377"/>
        <dbReference type="ChEBI" id="CHEBI:15378"/>
        <dbReference type="ChEBI" id="CHEBI:43474"/>
        <dbReference type="ChEBI" id="CHEBI:58405"/>
        <dbReference type="ChEBI" id="CHEBI:60392"/>
        <dbReference type="EC" id="3.6.1.27"/>
    </reaction>
</comment>
<comment type="subcellular location">
    <subcellularLocation>
        <location evidence="1">Cell inner membrane</location>
        <topology evidence="1">Multi-pass membrane protein</topology>
    </subcellularLocation>
</comment>
<comment type="miscellaneous">
    <text>Bacitracin is thought to be involved in the inhibition of peptidoglycan synthesis by sequestering undecaprenyl diphosphate, thereby reducing the pool of lipid carrier available.</text>
</comment>
<comment type="similarity">
    <text evidence="1">Belongs to the UppP family.</text>
</comment>
<dbReference type="EC" id="3.6.1.27" evidence="1"/>
<dbReference type="EMBL" id="AE009951">
    <property type="protein sequence ID" value="AAL93817.1"/>
    <property type="molecule type" value="Genomic_DNA"/>
</dbReference>
<dbReference type="RefSeq" id="NP_602518.1">
    <property type="nucleotide sequence ID" value="NC_003454.1"/>
</dbReference>
<dbReference type="SMR" id="Q8RIA6"/>
<dbReference type="FunCoup" id="Q8RIA6">
    <property type="interactions" value="251"/>
</dbReference>
<dbReference type="STRING" id="190304.FN1702"/>
<dbReference type="PaxDb" id="190304-FN1702"/>
<dbReference type="EnsemblBacteria" id="AAL93817">
    <property type="protein sequence ID" value="AAL93817"/>
    <property type="gene ID" value="FN1702"/>
</dbReference>
<dbReference type="KEGG" id="fnu:FN1702"/>
<dbReference type="PATRIC" id="fig|190304.8.peg.192"/>
<dbReference type="eggNOG" id="COG1968">
    <property type="taxonomic scope" value="Bacteria"/>
</dbReference>
<dbReference type="HOGENOM" id="CLU_060296_2_0_0"/>
<dbReference type="InParanoid" id="Q8RIA6"/>
<dbReference type="BioCyc" id="FNUC190304:G1FZS-204-MONOMER"/>
<dbReference type="Proteomes" id="UP000002521">
    <property type="component" value="Chromosome"/>
</dbReference>
<dbReference type="GO" id="GO:0005886">
    <property type="term" value="C:plasma membrane"/>
    <property type="evidence" value="ECO:0000318"/>
    <property type="project" value="GO_Central"/>
</dbReference>
<dbReference type="GO" id="GO:0050380">
    <property type="term" value="F:undecaprenyl-diphosphatase activity"/>
    <property type="evidence" value="ECO:0000318"/>
    <property type="project" value="GO_Central"/>
</dbReference>
<dbReference type="GO" id="GO:0071555">
    <property type="term" value="P:cell wall organization"/>
    <property type="evidence" value="ECO:0007669"/>
    <property type="project" value="UniProtKB-KW"/>
</dbReference>
<dbReference type="GO" id="GO:0009252">
    <property type="term" value="P:peptidoglycan biosynthetic process"/>
    <property type="evidence" value="ECO:0007669"/>
    <property type="project" value="UniProtKB-KW"/>
</dbReference>
<dbReference type="GO" id="GO:0000270">
    <property type="term" value="P:peptidoglycan metabolic process"/>
    <property type="evidence" value="ECO:0000318"/>
    <property type="project" value="GO_Central"/>
</dbReference>
<dbReference type="GO" id="GO:0008360">
    <property type="term" value="P:regulation of cell shape"/>
    <property type="evidence" value="ECO:0007669"/>
    <property type="project" value="UniProtKB-KW"/>
</dbReference>
<dbReference type="GO" id="GO:0046677">
    <property type="term" value="P:response to antibiotic"/>
    <property type="evidence" value="ECO:0007669"/>
    <property type="project" value="UniProtKB-UniRule"/>
</dbReference>
<dbReference type="HAMAP" id="MF_01006">
    <property type="entry name" value="Undec_diphosphatase"/>
    <property type="match status" value="1"/>
</dbReference>
<dbReference type="InterPro" id="IPR003824">
    <property type="entry name" value="UppP"/>
</dbReference>
<dbReference type="NCBIfam" id="NF001390">
    <property type="entry name" value="PRK00281.1-4"/>
    <property type="match status" value="1"/>
</dbReference>
<dbReference type="NCBIfam" id="NF001391">
    <property type="entry name" value="PRK00281.1-5"/>
    <property type="match status" value="1"/>
</dbReference>
<dbReference type="NCBIfam" id="TIGR00753">
    <property type="entry name" value="undec_PP_bacA"/>
    <property type="match status" value="1"/>
</dbReference>
<dbReference type="PANTHER" id="PTHR30622">
    <property type="entry name" value="UNDECAPRENYL-DIPHOSPHATASE"/>
    <property type="match status" value="1"/>
</dbReference>
<dbReference type="PANTHER" id="PTHR30622:SF3">
    <property type="entry name" value="UNDECAPRENYL-DIPHOSPHATASE"/>
    <property type="match status" value="1"/>
</dbReference>
<dbReference type="Pfam" id="PF02673">
    <property type="entry name" value="BacA"/>
    <property type="match status" value="1"/>
</dbReference>
<name>UPPP_FUSNN</name>
<keyword id="KW-0046">Antibiotic resistance</keyword>
<keyword id="KW-0997">Cell inner membrane</keyword>
<keyword id="KW-1003">Cell membrane</keyword>
<keyword id="KW-0133">Cell shape</keyword>
<keyword id="KW-0961">Cell wall biogenesis/degradation</keyword>
<keyword id="KW-0378">Hydrolase</keyword>
<keyword id="KW-0472">Membrane</keyword>
<keyword id="KW-0573">Peptidoglycan synthesis</keyword>
<keyword id="KW-1185">Reference proteome</keyword>
<keyword id="KW-0812">Transmembrane</keyword>
<keyword id="KW-1133">Transmembrane helix</keyword>
<feature type="chain" id="PRO_0000151152" description="Undecaprenyl-diphosphatase">
    <location>
        <begin position="1"/>
        <end position="266"/>
    </location>
</feature>
<feature type="transmembrane region" description="Helical" evidence="1">
    <location>
        <begin position="1"/>
        <end position="21"/>
    </location>
</feature>
<feature type="transmembrane region" description="Helical" evidence="1">
    <location>
        <begin position="43"/>
        <end position="63"/>
    </location>
</feature>
<feature type="transmembrane region" description="Helical" evidence="1">
    <location>
        <begin position="81"/>
        <end position="101"/>
    </location>
</feature>
<feature type="transmembrane region" description="Helical" evidence="1">
    <location>
        <begin position="109"/>
        <end position="129"/>
    </location>
</feature>
<feature type="transmembrane region" description="Helical" evidence="1">
    <location>
        <begin position="159"/>
        <end position="179"/>
    </location>
</feature>
<feature type="transmembrane region" description="Helical" evidence="1">
    <location>
        <begin position="183"/>
        <end position="203"/>
    </location>
</feature>
<feature type="transmembrane region" description="Helical" evidence="1">
    <location>
        <begin position="219"/>
        <end position="239"/>
    </location>
</feature>
<feature type="transmembrane region" description="Helical" evidence="1">
    <location>
        <begin position="246"/>
        <end position="266"/>
    </location>
</feature>
<proteinExistence type="inferred from homology"/>
<accession>Q8RIA6</accession>